<organism>
    <name type="scientific">Francisella tularensis subsp. tularensis (strain FSC 198)</name>
    <dbReference type="NCBI Taxonomy" id="393115"/>
    <lineage>
        <taxon>Bacteria</taxon>
        <taxon>Pseudomonadati</taxon>
        <taxon>Pseudomonadota</taxon>
        <taxon>Gammaproteobacteria</taxon>
        <taxon>Thiotrichales</taxon>
        <taxon>Francisellaceae</taxon>
        <taxon>Francisella</taxon>
    </lineage>
</organism>
<reference key="1">
    <citation type="journal article" date="2007" name="PLoS ONE">
        <title>Genome sequencing shows that European isolates of Francisella tularensis subspecies tularensis are almost identical to US laboratory strain Schu S4.</title>
        <authorList>
            <person name="Chaudhuri R.R."/>
            <person name="Ren C.-P."/>
            <person name="Desmond L."/>
            <person name="Vincent G.A."/>
            <person name="Silman N.J."/>
            <person name="Brehm J.K."/>
            <person name="Elmore M.J."/>
            <person name="Hudson M.J."/>
            <person name="Forsman M."/>
            <person name="Isherwood K.E."/>
            <person name="Gurycova D."/>
            <person name="Minton N.P."/>
            <person name="Titball R.W."/>
            <person name="Pallen M.J."/>
            <person name="Vipond R."/>
        </authorList>
    </citation>
    <scope>NUCLEOTIDE SEQUENCE [LARGE SCALE GENOMIC DNA]</scope>
    <source>
        <strain>FSC 198</strain>
    </source>
</reference>
<protein>
    <recommendedName>
        <fullName evidence="1">Uroporphyrinogen decarboxylase</fullName>
        <shortName evidence="1">UPD</shortName>
        <shortName evidence="1">URO-D</shortName>
        <ecNumber evidence="1">4.1.1.37</ecNumber>
    </recommendedName>
</protein>
<feature type="chain" id="PRO_0000325644" description="Uroporphyrinogen decarboxylase">
    <location>
        <begin position="1"/>
        <end position="344"/>
    </location>
</feature>
<feature type="binding site" evidence="1">
    <location>
        <begin position="23"/>
        <end position="27"/>
    </location>
    <ligand>
        <name>substrate</name>
    </ligand>
</feature>
<feature type="binding site" evidence="1">
    <location>
        <position position="73"/>
    </location>
    <ligand>
        <name>substrate</name>
    </ligand>
</feature>
<feature type="binding site" evidence="1">
    <location>
        <position position="149"/>
    </location>
    <ligand>
        <name>substrate</name>
    </ligand>
</feature>
<feature type="binding site" evidence="1">
    <location>
        <position position="204"/>
    </location>
    <ligand>
        <name>substrate</name>
    </ligand>
</feature>
<feature type="binding site" evidence="1">
    <location>
        <position position="321"/>
    </location>
    <ligand>
        <name>substrate</name>
    </ligand>
</feature>
<feature type="site" description="Transition state stabilizer" evidence="1">
    <location>
        <position position="73"/>
    </location>
</feature>
<sequence>MRKLFLDAFGEKKLDKPPVWIMRQAGRYLPEYRAVRAKFDNFMDMCRNADACCEVALHPLQRYDLDAAIVFSDILTIPEAMGMDLKFIKGTGPVFSEPIQSQKDLDKLKSIEDSIGSLDYVYNAVKTTSSAINVPLIGFTGSPWTLAAYMIEGSGSKQFNKLRKMMYANPQLMHSLLQRLADITIIYLLEQVKAGASSVMIFDTWGGILPLEHYKNFSLKYMEYIAKNVKQKINIPIVFFTKGGSNFFEEIKDKSCDGVGVDWSVTLKQARHRIGVGKVLQGNFDPAFLYGSKQSIRETVRANIEFIQSDKLNNYIVNLGHGIYPDIDPDSVRVMIDAIREFSA</sequence>
<dbReference type="EC" id="4.1.1.37" evidence="1"/>
<dbReference type="EMBL" id="AM286280">
    <property type="protein sequence ID" value="CAL08063.1"/>
    <property type="molecule type" value="Genomic_DNA"/>
</dbReference>
<dbReference type="RefSeq" id="WP_003022918.1">
    <property type="nucleotide sequence ID" value="NC_008245.1"/>
</dbReference>
<dbReference type="SMR" id="Q14K23"/>
<dbReference type="GeneID" id="75264605"/>
<dbReference type="KEGG" id="ftf:FTF0047"/>
<dbReference type="HOGENOM" id="CLU_040933_0_0_6"/>
<dbReference type="UniPathway" id="UPA00251">
    <property type="reaction ID" value="UER00321"/>
</dbReference>
<dbReference type="GO" id="GO:0005829">
    <property type="term" value="C:cytosol"/>
    <property type="evidence" value="ECO:0007669"/>
    <property type="project" value="TreeGrafter"/>
</dbReference>
<dbReference type="GO" id="GO:0004853">
    <property type="term" value="F:uroporphyrinogen decarboxylase activity"/>
    <property type="evidence" value="ECO:0007669"/>
    <property type="project" value="UniProtKB-UniRule"/>
</dbReference>
<dbReference type="GO" id="GO:0006782">
    <property type="term" value="P:protoporphyrinogen IX biosynthetic process"/>
    <property type="evidence" value="ECO:0007669"/>
    <property type="project" value="UniProtKB-UniRule"/>
</dbReference>
<dbReference type="CDD" id="cd00717">
    <property type="entry name" value="URO-D"/>
    <property type="match status" value="1"/>
</dbReference>
<dbReference type="FunFam" id="3.20.20.210:FF:000008">
    <property type="entry name" value="Uroporphyrinogen decarboxylase"/>
    <property type="match status" value="1"/>
</dbReference>
<dbReference type="Gene3D" id="3.20.20.210">
    <property type="match status" value="1"/>
</dbReference>
<dbReference type="HAMAP" id="MF_00218">
    <property type="entry name" value="URO_D"/>
    <property type="match status" value="1"/>
</dbReference>
<dbReference type="InterPro" id="IPR038071">
    <property type="entry name" value="UROD/MetE-like_sf"/>
</dbReference>
<dbReference type="InterPro" id="IPR006361">
    <property type="entry name" value="Uroporphyrinogen_deCO2ase_HemE"/>
</dbReference>
<dbReference type="InterPro" id="IPR000257">
    <property type="entry name" value="Uroporphyrinogen_deCOase"/>
</dbReference>
<dbReference type="NCBIfam" id="TIGR01464">
    <property type="entry name" value="hemE"/>
    <property type="match status" value="1"/>
</dbReference>
<dbReference type="PANTHER" id="PTHR21091">
    <property type="entry name" value="METHYLTETRAHYDROFOLATE:HOMOCYSTEINE METHYLTRANSFERASE RELATED"/>
    <property type="match status" value="1"/>
</dbReference>
<dbReference type="PANTHER" id="PTHR21091:SF169">
    <property type="entry name" value="UROPORPHYRINOGEN DECARBOXYLASE"/>
    <property type="match status" value="1"/>
</dbReference>
<dbReference type="Pfam" id="PF01208">
    <property type="entry name" value="URO-D"/>
    <property type="match status" value="1"/>
</dbReference>
<dbReference type="SUPFAM" id="SSF51726">
    <property type="entry name" value="UROD/MetE-like"/>
    <property type="match status" value="1"/>
</dbReference>
<dbReference type="PROSITE" id="PS00906">
    <property type="entry name" value="UROD_1"/>
    <property type="match status" value="1"/>
</dbReference>
<dbReference type="PROSITE" id="PS00907">
    <property type="entry name" value="UROD_2"/>
    <property type="match status" value="1"/>
</dbReference>
<gene>
    <name evidence="1" type="primary">hemE</name>
    <name type="ordered locus">FTF0047</name>
</gene>
<comment type="function">
    <text evidence="1">Catalyzes the decarboxylation of four acetate groups of uroporphyrinogen-III to yield coproporphyrinogen-III.</text>
</comment>
<comment type="catalytic activity">
    <reaction evidence="1">
        <text>uroporphyrinogen III + 4 H(+) = coproporphyrinogen III + 4 CO2</text>
        <dbReference type="Rhea" id="RHEA:19865"/>
        <dbReference type="ChEBI" id="CHEBI:15378"/>
        <dbReference type="ChEBI" id="CHEBI:16526"/>
        <dbReference type="ChEBI" id="CHEBI:57308"/>
        <dbReference type="ChEBI" id="CHEBI:57309"/>
        <dbReference type="EC" id="4.1.1.37"/>
    </reaction>
</comment>
<comment type="pathway">
    <text evidence="1">Porphyrin-containing compound metabolism; protoporphyrin-IX biosynthesis; coproporphyrinogen-III from 5-aminolevulinate: step 4/4.</text>
</comment>
<comment type="subunit">
    <text evidence="1">Homodimer.</text>
</comment>
<comment type="subcellular location">
    <subcellularLocation>
        <location evidence="1">Cytoplasm</location>
    </subcellularLocation>
</comment>
<comment type="similarity">
    <text evidence="1">Belongs to the uroporphyrinogen decarboxylase family.</text>
</comment>
<evidence type="ECO:0000255" key="1">
    <source>
        <dbReference type="HAMAP-Rule" id="MF_00218"/>
    </source>
</evidence>
<name>DCUP_FRAT1</name>
<accession>Q14K23</accession>
<keyword id="KW-0963">Cytoplasm</keyword>
<keyword id="KW-0210">Decarboxylase</keyword>
<keyword id="KW-0456">Lyase</keyword>
<keyword id="KW-0627">Porphyrin biosynthesis</keyword>
<proteinExistence type="inferred from homology"/>